<feature type="chain" id="PRO_0000239787" description="Bifunctional pantoate ligase/cytidylate kinase">
    <location>
        <begin position="1"/>
        <end position="534"/>
    </location>
</feature>
<feature type="region of interest" description="Pantoate--beta-alanine ligase" evidence="1">
    <location>
        <begin position="1"/>
        <end position="302"/>
    </location>
</feature>
<feature type="region of interest" description="Cytidylate kinase" evidence="1">
    <location>
        <begin position="303"/>
        <end position="534"/>
    </location>
</feature>
<feature type="active site" description="Proton donor" evidence="1">
    <location>
        <position position="55"/>
    </location>
</feature>
<feature type="binding site" evidence="1">
    <location>
        <begin position="48"/>
        <end position="55"/>
    </location>
    <ligand>
        <name>ATP</name>
        <dbReference type="ChEBI" id="CHEBI:30616"/>
    </ligand>
</feature>
<feature type="binding site" evidence="1">
    <location>
        <position position="79"/>
    </location>
    <ligand>
        <name>(R)-pantoate</name>
        <dbReference type="ChEBI" id="CHEBI:15980"/>
    </ligand>
</feature>
<feature type="binding site" evidence="1">
    <location>
        <position position="79"/>
    </location>
    <ligand>
        <name>beta-alanine</name>
        <dbReference type="ChEBI" id="CHEBI:57966"/>
    </ligand>
</feature>
<feature type="binding site" evidence="1">
    <location>
        <begin position="172"/>
        <end position="175"/>
    </location>
    <ligand>
        <name>ATP</name>
        <dbReference type="ChEBI" id="CHEBI:30616"/>
    </ligand>
</feature>
<feature type="binding site" evidence="1">
    <location>
        <position position="178"/>
    </location>
    <ligand>
        <name>(R)-pantoate</name>
        <dbReference type="ChEBI" id="CHEBI:15980"/>
    </ligand>
</feature>
<feature type="binding site" evidence="1">
    <location>
        <position position="201"/>
    </location>
    <ligand>
        <name>ATP</name>
        <dbReference type="ChEBI" id="CHEBI:30616"/>
    </ligand>
</feature>
<feature type="binding site" evidence="1">
    <location>
        <begin position="209"/>
        <end position="212"/>
    </location>
    <ligand>
        <name>ATP</name>
        <dbReference type="ChEBI" id="CHEBI:30616"/>
    </ligand>
</feature>
<comment type="function">
    <text evidence="1">Catalyzes the condensation of pantoate with beta-alanine in an ATP-dependent reaction via a pantoyl-adenylate intermediate.</text>
</comment>
<comment type="function">
    <text evidence="1">Catalyzes the transfer of a phosphate group from ATP to either CMP or dCMP to form CDP or dCDP and ADP, respectively.</text>
</comment>
<comment type="catalytic activity">
    <reaction evidence="1">
        <text>(R)-pantoate + beta-alanine + ATP = (R)-pantothenate + AMP + diphosphate + H(+)</text>
        <dbReference type="Rhea" id="RHEA:10912"/>
        <dbReference type="ChEBI" id="CHEBI:15378"/>
        <dbReference type="ChEBI" id="CHEBI:15980"/>
        <dbReference type="ChEBI" id="CHEBI:29032"/>
        <dbReference type="ChEBI" id="CHEBI:30616"/>
        <dbReference type="ChEBI" id="CHEBI:33019"/>
        <dbReference type="ChEBI" id="CHEBI:57966"/>
        <dbReference type="ChEBI" id="CHEBI:456215"/>
        <dbReference type="EC" id="6.3.2.1"/>
    </reaction>
</comment>
<comment type="catalytic activity">
    <reaction evidence="1">
        <text>CMP + ATP = CDP + ADP</text>
        <dbReference type="Rhea" id="RHEA:11600"/>
        <dbReference type="ChEBI" id="CHEBI:30616"/>
        <dbReference type="ChEBI" id="CHEBI:58069"/>
        <dbReference type="ChEBI" id="CHEBI:60377"/>
        <dbReference type="ChEBI" id="CHEBI:456216"/>
        <dbReference type="EC" id="2.7.4.25"/>
    </reaction>
</comment>
<comment type="catalytic activity">
    <reaction evidence="1">
        <text>dCMP + ATP = dCDP + ADP</text>
        <dbReference type="Rhea" id="RHEA:25094"/>
        <dbReference type="ChEBI" id="CHEBI:30616"/>
        <dbReference type="ChEBI" id="CHEBI:57566"/>
        <dbReference type="ChEBI" id="CHEBI:58593"/>
        <dbReference type="ChEBI" id="CHEBI:456216"/>
        <dbReference type="EC" id="2.7.4.25"/>
    </reaction>
</comment>
<comment type="pathway">
    <text evidence="1">Cofactor biosynthesis; (R)-pantothenate biosynthesis; (R)-pantothenate from (R)-pantoate and beta-alanine: step 1/1.</text>
</comment>
<comment type="subcellular location">
    <subcellularLocation>
        <location evidence="1">Cytoplasm</location>
    </subcellularLocation>
</comment>
<comment type="similarity">
    <text evidence="1">In the N-terminal section; belongs to the pantothenate synthetase family.</text>
</comment>
<comment type="similarity">
    <text evidence="1">In the C-terminal section; belongs to the cytidylate kinase family. Type 1 subfamily.</text>
</comment>
<sequence>MRLLTTVAALRCYLNKRRWESRLTASEEQILDSMTSWYQTAIGLVPTMGSLHQGHLSLIERARHENSTVIVSIFINPLQFGPNEDYGRYPRTLEQDRQLCEQGGVDAIFAPSPEELGIPQKNIQESQVTQVIPPSVMISGLCGHSRLGHFQGVATIVTKLLNLVQPDRAYFGQKDGQQLAVIKRLVADLDLPVEIVACPTVREASGLACSSRNQYLTAQEKQQAAVLYRGLLQAEAAFKAGVRYSSRLREVVRQELAKVSSVLVEYIELVEPTTLMPLDKIQEEGMLAIAARLGSTRLIDNTILRDRQPIIAIDGPAGAGKSTVARQVATKLGLVYLDTGAMYRAVTWLVLQQGIAIDDDCAIAELASKCKIELTPSQDLQSPVRVWINDTDVTQNIRTIEVTSQVSAIAAQAAVRQALVKQQQRWGKRGGLVAEGRDIGTHVFPDAEVKIFLTASVGERARRRQQDFQKQGQPEVSLEQLEKDIAERDWKDSTRKVSPLQKAADAVELQTDGLSISDVASQIVDYYQQRLSQW</sequence>
<name>PANCY_NOSS1</name>
<dbReference type="EC" id="6.3.2.1" evidence="1"/>
<dbReference type="EC" id="2.7.4.25" evidence="1"/>
<dbReference type="EMBL" id="BA000019">
    <property type="protein sequence ID" value="BAB74635.1"/>
    <property type="molecule type" value="Genomic_DNA"/>
</dbReference>
<dbReference type="PIR" id="AI2172">
    <property type="entry name" value="AI2172"/>
</dbReference>
<dbReference type="RefSeq" id="WP_010997087.1">
    <property type="nucleotide sequence ID" value="NZ_RSCN01000003.1"/>
</dbReference>
<dbReference type="SMR" id="Q8YSZ3"/>
<dbReference type="STRING" id="103690.gene:10494972"/>
<dbReference type="KEGG" id="ana:alr2936"/>
<dbReference type="eggNOG" id="COG0283">
    <property type="taxonomic scope" value="Bacteria"/>
</dbReference>
<dbReference type="eggNOG" id="COG0414">
    <property type="taxonomic scope" value="Bacteria"/>
</dbReference>
<dbReference type="OrthoDB" id="9773087at2"/>
<dbReference type="UniPathway" id="UPA00028">
    <property type="reaction ID" value="UER00005"/>
</dbReference>
<dbReference type="Proteomes" id="UP000002483">
    <property type="component" value="Chromosome"/>
</dbReference>
<dbReference type="GO" id="GO:0005829">
    <property type="term" value="C:cytosol"/>
    <property type="evidence" value="ECO:0007669"/>
    <property type="project" value="TreeGrafter"/>
</dbReference>
<dbReference type="GO" id="GO:0005524">
    <property type="term" value="F:ATP binding"/>
    <property type="evidence" value="ECO:0007669"/>
    <property type="project" value="UniProtKB-UniRule"/>
</dbReference>
<dbReference type="GO" id="GO:0036430">
    <property type="term" value="F:CMP kinase activity"/>
    <property type="evidence" value="ECO:0007669"/>
    <property type="project" value="RHEA"/>
</dbReference>
<dbReference type="GO" id="GO:0036431">
    <property type="term" value="F:dCMP kinase activity"/>
    <property type="evidence" value="ECO:0007669"/>
    <property type="project" value="RHEA"/>
</dbReference>
<dbReference type="GO" id="GO:0004592">
    <property type="term" value="F:pantoate-beta-alanine ligase activity"/>
    <property type="evidence" value="ECO:0007669"/>
    <property type="project" value="UniProtKB-UniRule"/>
</dbReference>
<dbReference type="GO" id="GO:0015949">
    <property type="term" value="P:nucleobase-containing small molecule interconversion"/>
    <property type="evidence" value="ECO:0007669"/>
    <property type="project" value="TreeGrafter"/>
</dbReference>
<dbReference type="GO" id="GO:0015940">
    <property type="term" value="P:pantothenate biosynthetic process"/>
    <property type="evidence" value="ECO:0007669"/>
    <property type="project" value="UniProtKB-UniRule"/>
</dbReference>
<dbReference type="GO" id="GO:0006220">
    <property type="term" value="P:pyrimidine nucleotide metabolic process"/>
    <property type="evidence" value="ECO:0007669"/>
    <property type="project" value="UniProtKB-UniRule"/>
</dbReference>
<dbReference type="CDD" id="cd02020">
    <property type="entry name" value="CMPK"/>
    <property type="match status" value="1"/>
</dbReference>
<dbReference type="CDD" id="cd02019">
    <property type="entry name" value="NK"/>
    <property type="match status" value="1"/>
</dbReference>
<dbReference type="CDD" id="cd00560">
    <property type="entry name" value="PanC"/>
    <property type="match status" value="1"/>
</dbReference>
<dbReference type="Gene3D" id="3.40.50.620">
    <property type="entry name" value="HUPs"/>
    <property type="match status" value="1"/>
</dbReference>
<dbReference type="Gene3D" id="3.40.50.300">
    <property type="entry name" value="P-loop containing nucleotide triphosphate hydrolases"/>
    <property type="match status" value="1"/>
</dbReference>
<dbReference type="Gene3D" id="3.30.1300.10">
    <property type="entry name" value="Pantoate-beta-alanine ligase, C-terminal domain"/>
    <property type="match status" value="1"/>
</dbReference>
<dbReference type="HAMAP" id="MF_00238">
    <property type="entry name" value="Cytidyl_kinase_type1"/>
    <property type="match status" value="1"/>
</dbReference>
<dbReference type="HAMAP" id="MF_00158">
    <property type="entry name" value="PanC"/>
    <property type="match status" value="1"/>
</dbReference>
<dbReference type="HAMAP" id="MF_01349">
    <property type="entry name" value="PanCY"/>
    <property type="match status" value="1"/>
</dbReference>
<dbReference type="InterPro" id="IPR004821">
    <property type="entry name" value="Cyt_trans-like"/>
</dbReference>
<dbReference type="InterPro" id="IPR003136">
    <property type="entry name" value="Cytidylate_kin"/>
</dbReference>
<dbReference type="InterPro" id="IPR011994">
    <property type="entry name" value="Cytidylate_kinase_dom"/>
</dbReference>
<dbReference type="InterPro" id="IPR027417">
    <property type="entry name" value="P-loop_NTPase"/>
</dbReference>
<dbReference type="InterPro" id="IPR003721">
    <property type="entry name" value="Pantoate_ligase"/>
</dbReference>
<dbReference type="InterPro" id="IPR024894">
    <property type="entry name" value="Pantoate_ligase/cytidylate_kin"/>
</dbReference>
<dbReference type="InterPro" id="IPR042176">
    <property type="entry name" value="Pantoate_ligase_C"/>
</dbReference>
<dbReference type="InterPro" id="IPR014729">
    <property type="entry name" value="Rossmann-like_a/b/a_fold"/>
</dbReference>
<dbReference type="NCBIfam" id="TIGR00017">
    <property type="entry name" value="cmk"/>
    <property type="match status" value="1"/>
</dbReference>
<dbReference type="NCBIfam" id="TIGR00125">
    <property type="entry name" value="cyt_tran_rel"/>
    <property type="match status" value="1"/>
</dbReference>
<dbReference type="NCBIfam" id="TIGR00018">
    <property type="entry name" value="panC"/>
    <property type="match status" value="1"/>
</dbReference>
<dbReference type="NCBIfam" id="NF010004">
    <property type="entry name" value="PRK13477.1"/>
    <property type="match status" value="1"/>
</dbReference>
<dbReference type="PANTHER" id="PTHR21299:SF2">
    <property type="entry name" value="CYTIDYLATE KINASE"/>
    <property type="match status" value="1"/>
</dbReference>
<dbReference type="PANTHER" id="PTHR21299">
    <property type="entry name" value="CYTIDYLATE KINASE/PANTOATE-BETA-ALANINE LIGASE"/>
    <property type="match status" value="1"/>
</dbReference>
<dbReference type="Pfam" id="PF02224">
    <property type="entry name" value="Cytidylate_kin"/>
    <property type="match status" value="1"/>
</dbReference>
<dbReference type="Pfam" id="PF02569">
    <property type="entry name" value="Pantoate_ligase"/>
    <property type="match status" value="1"/>
</dbReference>
<dbReference type="SUPFAM" id="SSF52374">
    <property type="entry name" value="Nucleotidylyl transferase"/>
    <property type="match status" value="1"/>
</dbReference>
<dbReference type="SUPFAM" id="SSF52540">
    <property type="entry name" value="P-loop containing nucleoside triphosphate hydrolases"/>
    <property type="match status" value="1"/>
</dbReference>
<keyword id="KW-0067">ATP-binding</keyword>
<keyword id="KW-0963">Cytoplasm</keyword>
<keyword id="KW-0418">Kinase</keyword>
<keyword id="KW-0436">Ligase</keyword>
<keyword id="KW-0511">Multifunctional enzyme</keyword>
<keyword id="KW-0547">Nucleotide-binding</keyword>
<keyword id="KW-0566">Pantothenate biosynthesis</keyword>
<keyword id="KW-1185">Reference proteome</keyword>
<keyword id="KW-0808">Transferase</keyword>
<organism>
    <name type="scientific">Nostoc sp. (strain PCC 7120 / SAG 25.82 / UTEX 2576)</name>
    <dbReference type="NCBI Taxonomy" id="103690"/>
    <lineage>
        <taxon>Bacteria</taxon>
        <taxon>Bacillati</taxon>
        <taxon>Cyanobacteriota</taxon>
        <taxon>Cyanophyceae</taxon>
        <taxon>Nostocales</taxon>
        <taxon>Nostocaceae</taxon>
        <taxon>Nostoc</taxon>
    </lineage>
</organism>
<proteinExistence type="inferred from homology"/>
<reference key="1">
    <citation type="journal article" date="2001" name="DNA Res.">
        <title>Complete genomic sequence of the filamentous nitrogen-fixing cyanobacterium Anabaena sp. strain PCC 7120.</title>
        <authorList>
            <person name="Kaneko T."/>
            <person name="Nakamura Y."/>
            <person name="Wolk C.P."/>
            <person name="Kuritz T."/>
            <person name="Sasamoto S."/>
            <person name="Watanabe A."/>
            <person name="Iriguchi M."/>
            <person name="Ishikawa A."/>
            <person name="Kawashima K."/>
            <person name="Kimura T."/>
            <person name="Kishida Y."/>
            <person name="Kohara M."/>
            <person name="Matsumoto M."/>
            <person name="Matsuno A."/>
            <person name="Muraki A."/>
            <person name="Nakazaki N."/>
            <person name="Shimpo S."/>
            <person name="Sugimoto M."/>
            <person name="Takazawa M."/>
            <person name="Yamada M."/>
            <person name="Yasuda M."/>
            <person name="Tabata S."/>
        </authorList>
    </citation>
    <scope>NUCLEOTIDE SEQUENCE [LARGE SCALE GENOMIC DNA]</scope>
    <source>
        <strain>PCC 7120 / SAG 25.82 / UTEX 2576</strain>
    </source>
</reference>
<gene>
    <name evidence="1" type="primary">panC/cmk</name>
    <name type="ordered locus">alr2936</name>
</gene>
<accession>Q8YSZ3</accession>
<protein>
    <recommendedName>
        <fullName evidence="1">Bifunctional pantoate ligase/cytidylate kinase</fullName>
    </recommendedName>
    <domain>
        <recommendedName>
            <fullName evidence="1">Pantothenate synthetase</fullName>
            <shortName evidence="1">PS</shortName>
            <ecNumber evidence="1">6.3.2.1</ecNumber>
        </recommendedName>
        <alternativeName>
            <fullName evidence="1">Pantoate--beta-alanine ligase</fullName>
        </alternativeName>
        <alternativeName>
            <fullName evidence="1">Pantoate-activating enzyme</fullName>
        </alternativeName>
    </domain>
    <domain>
        <recommendedName>
            <fullName evidence="1">Cytidylate kinase</fullName>
            <shortName evidence="1">CK</shortName>
            <ecNumber evidence="1">2.7.4.25</ecNumber>
        </recommendedName>
        <alternativeName>
            <fullName evidence="1">Cytidine monophosphate kinase</fullName>
            <shortName evidence="1">CMP kinase</shortName>
        </alternativeName>
    </domain>
</protein>
<evidence type="ECO:0000255" key="1">
    <source>
        <dbReference type="HAMAP-Rule" id="MF_01349"/>
    </source>
</evidence>